<reference key="1">
    <citation type="submission" date="2003-03" db="EMBL/GenBank/DDBJ databases">
        <title>African swine fever virus genomes.</title>
        <authorList>
            <person name="Kutish G.F."/>
            <person name="Rock D.L."/>
        </authorList>
    </citation>
    <scope>NUCLEOTIDE SEQUENCE [LARGE SCALE GENOMIC DNA]</scope>
</reference>
<proteinExistence type="inferred from homology"/>
<keyword id="KW-0325">Glycoprotein</keyword>
<keyword id="KW-1043">Host membrane</keyword>
<keyword id="KW-0472">Membrane</keyword>
<keyword id="KW-0812">Transmembrane</keyword>
<keyword id="KW-1133">Transmembrane helix</keyword>
<keyword id="KW-0946">Virion</keyword>
<name>VF117_ASFWA</name>
<organismHost>
    <name type="scientific">Ornithodoros</name>
    <name type="common">relapsing fever ticks</name>
    <dbReference type="NCBI Taxonomy" id="6937"/>
</organismHost>
<organismHost>
    <name type="scientific">Phacochoerus aethiopicus</name>
    <name type="common">Warthog</name>
    <dbReference type="NCBI Taxonomy" id="85517"/>
</organismHost>
<organismHost>
    <name type="scientific">Phacochoerus africanus</name>
    <name type="common">Warthog</name>
    <dbReference type="NCBI Taxonomy" id="41426"/>
</organismHost>
<organismHost>
    <name type="scientific">Potamochoerus larvatus</name>
    <name type="common">Bushpig</name>
    <dbReference type="NCBI Taxonomy" id="273792"/>
</organismHost>
<organismHost>
    <name type="scientific">Sus scrofa</name>
    <name type="common">Pig</name>
    <dbReference type="NCBI Taxonomy" id="9823"/>
</organismHost>
<organism>
    <name type="scientific">African swine fever virus (isolate Warthog/Namibia/Wart80/1980)</name>
    <name type="common">ASFV</name>
    <dbReference type="NCBI Taxonomy" id="561444"/>
    <lineage>
        <taxon>Viruses</taxon>
        <taxon>Varidnaviria</taxon>
        <taxon>Bamfordvirae</taxon>
        <taxon>Nucleocytoviricota</taxon>
        <taxon>Pokkesviricetes</taxon>
        <taxon>Asfuvirales</taxon>
        <taxon>Asfarviridae</taxon>
        <taxon>Asfivirus</taxon>
        <taxon>African swine fever virus</taxon>
    </lineage>
</organism>
<sequence>MGYTIQLDKDGDYCWDEDPTHHDPYMQANTTSHTAVSRAAMAAPHVAAHHAFHEPFIKLNLTDKNIFNGLGFILIVIFIYLLLITLQQMLTRHIYNTVQHCVKAHLDSKNLQ</sequence>
<evidence type="ECO:0000250" key="1">
    <source>
        <dbReference type="UniProtKB" id="Q65172"/>
    </source>
</evidence>
<evidence type="ECO:0000255" key="2"/>
<evidence type="ECO:0000305" key="3"/>
<dbReference type="EMBL" id="AY261366">
    <property type="status" value="NOT_ANNOTATED_CDS"/>
    <property type="molecule type" value="Genomic_DNA"/>
</dbReference>
<dbReference type="SMR" id="P0CA21"/>
<dbReference type="Proteomes" id="UP000000858">
    <property type="component" value="Segment"/>
</dbReference>
<dbReference type="GO" id="GO:0033644">
    <property type="term" value="C:host cell membrane"/>
    <property type="evidence" value="ECO:0007669"/>
    <property type="project" value="UniProtKB-SubCell"/>
</dbReference>
<dbReference type="GO" id="GO:0016020">
    <property type="term" value="C:membrane"/>
    <property type="evidence" value="ECO:0007669"/>
    <property type="project" value="UniProtKB-KW"/>
</dbReference>
<dbReference type="GO" id="GO:0044423">
    <property type="term" value="C:virion component"/>
    <property type="evidence" value="ECO:0007669"/>
    <property type="project" value="UniProtKB-KW"/>
</dbReference>
<feature type="chain" id="PRO_0000373484" description="Uncharacterized protein B117L">
    <location>
        <begin position="1"/>
        <end position="112"/>
    </location>
</feature>
<feature type="transmembrane region" description="Helical" evidence="2">
    <location>
        <begin position="66"/>
        <end position="86"/>
    </location>
</feature>
<feature type="glycosylation site" description="N-linked (GlcNAc...) asparagine; by host" evidence="2">
    <location>
        <position position="29"/>
    </location>
</feature>
<feature type="glycosylation site" description="N-linked (GlcNAc...) asparagine; by host" evidence="2">
    <location>
        <position position="60"/>
    </location>
</feature>
<gene>
    <name type="ordered locus">War-093</name>
</gene>
<protein>
    <recommendedName>
        <fullName>Uncharacterized protein B117L</fullName>
        <shortName>pB117L</shortName>
    </recommendedName>
</protein>
<comment type="subcellular location">
    <subcellularLocation>
        <location evidence="3">Host membrane</location>
        <topology evidence="3">Single-pass membrane protein</topology>
    </subcellularLocation>
    <subcellularLocation>
        <location evidence="1">Virion</location>
    </subcellularLocation>
</comment>
<comment type="similarity">
    <text evidence="3">Belongs to the asfivirus B117L family.</text>
</comment>
<accession>P0CA21</accession>